<reference key="1">
    <citation type="journal article" date="2005" name="Nucleic Acids Res.">
        <title>Genome dynamics and diversity of Shigella species, the etiologic agents of bacillary dysentery.</title>
        <authorList>
            <person name="Yang F."/>
            <person name="Yang J."/>
            <person name="Zhang X."/>
            <person name="Chen L."/>
            <person name="Jiang Y."/>
            <person name="Yan Y."/>
            <person name="Tang X."/>
            <person name="Wang J."/>
            <person name="Xiong Z."/>
            <person name="Dong J."/>
            <person name="Xue Y."/>
            <person name="Zhu Y."/>
            <person name="Xu X."/>
            <person name="Sun L."/>
            <person name="Chen S."/>
            <person name="Nie H."/>
            <person name="Peng J."/>
            <person name="Xu J."/>
            <person name="Wang Y."/>
            <person name="Yuan Z."/>
            <person name="Wen Y."/>
            <person name="Yao Z."/>
            <person name="Shen Y."/>
            <person name="Qiang B."/>
            <person name="Hou Y."/>
            <person name="Yu J."/>
            <person name="Jin Q."/>
        </authorList>
    </citation>
    <scope>NUCLEOTIDE SEQUENCE [LARGE SCALE GENOMIC DNA]</scope>
    <source>
        <strain>Sb227</strain>
    </source>
</reference>
<protein>
    <recommendedName>
        <fullName evidence="1">Malate dehydrogenase</fullName>
        <ecNumber evidence="1">1.1.1.37</ecNumber>
    </recommendedName>
</protein>
<dbReference type="EC" id="1.1.1.37" evidence="1"/>
<dbReference type="EMBL" id="CP000036">
    <property type="protein sequence ID" value="ABB67654.1"/>
    <property type="molecule type" value="Genomic_DNA"/>
</dbReference>
<dbReference type="RefSeq" id="WP_001295272.1">
    <property type="nucleotide sequence ID" value="NC_007613.1"/>
</dbReference>
<dbReference type="SMR" id="Q31WA4"/>
<dbReference type="GeneID" id="93778749"/>
<dbReference type="KEGG" id="sbo:SBO_3153"/>
<dbReference type="HOGENOM" id="CLU_047181_0_1_6"/>
<dbReference type="Proteomes" id="UP000007067">
    <property type="component" value="Chromosome"/>
</dbReference>
<dbReference type="GO" id="GO:0005737">
    <property type="term" value="C:cytoplasm"/>
    <property type="evidence" value="ECO:0007669"/>
    <property type="project" value="TreeGrafter"/>
</dbReference>
<dbReference type="GO" id="GO:0030060">
    <property type="term" value="F:L-malate dehydrogenase (NAD+) activity"/>
    <property type="evidence" value="ECO:0007669"/>
    <property type="project" value="UniProtKB-UniRule"/>
</dbReference>
<dbReference type="GO" id="GO:0006108">
    <property type="term" value="P:malate metabolic process"/>
    <property type="evidence" value="ECO:0007669"/>
    <property type="project" value="InterPro"/>
</dbReference>
<dbReference type="GO" id="GO:0006099">
    <property type="term" value="P:tricarboxylic acid cycle"/>
    <property type="evidence" value="ECO:0007669"/>
    <property type="project" value="UniProtKB-UniRule"/>
</dbReference>
<dbReference type="CDD" id="cd01337">
    <property type="entry name" value="MDH_glyoxysomal_mitochondrial"/>
    <property type="match status" value="1"/>
</dbReference>
<dbReference type="FunFam" id="3.40.50.720:FF:000017">
    <property type="entry name" value="Malate dehydrogenase"/>
    <property type="match status" value="1"/>
</dbReference>
<dbReference type="FunFam" id="3.90.110.10:FF:000001">
    <property type="entry name" value="Malate dehydrogenase"/>
    <property type="match status" value="1"/>
</dbReference>
<dbReference type="Gene3D" id="3.90.110.10">
    <property type="entry name" value="Lactate dehydrogenase/glycoside hydrolase, family 4, C-terminal"/>
    <property type="match status" value="1"/>
</dbReference>
<dbReference type="Gene3D" id="3.40.50.720">
    <property type="entry name" value="NAD(P)-binding Rossmann-like Domain"/>
    <property type="match status" value="1"/>
</dbReference>
<dbReference type="HAMAP" id="MF_01516">
    <property type="entry name" value="Malate_dehydrog_1"/>
    <property type="match status" value="1"/>
</dbReference>
<dbReference type="InterPro" id="IPR001557">
    <property type="entry name" value="L-lactate/malate_DH"/>
</dbReference>
<dbReference type="InterPro" id="IPR022383">
    <property type="entry name" value="Lactate/malate_DH_C"/>
</dbReference>
<dbReference type="InterPro" id="IPR001236">
    <property type="entry name" value="Lactate/malate_DH_N"/>
</dbReference>
<dbReference type="InterPro" id="IPR015955">
    <property type="entry name" value="Lactate_DH/Glyco_Ohase_4_C"/>
</dbReference>
<dbReference type="InterPro" id="IPR001252">
    <property type="entry name" value="Malate_DH_AS"/>
</dbReference>
<dbReference type="InterPro" id="IPR010097">
    <property type="entry name" value="Malate_DH_type1"/>
</dbReference>
<dbReference type="InterPro" id="IPR023958">
    <property type="entry name" value="Malate_DH_type1_bac"/>
</dbReference>
<dbReference type="InterPro" id="IPR036291">
    <property type="entry name" value="NAD(P)-bd_dom_sf"/>
</dbReference>
<dbReference type="NCBIfam" id="TIGR01772">
    <property type="entry name" value="MDH_euk_gproteo"/>
    <property type="match status" value="1"/>
</dbReference>
<dbReference type="PANTHER" id="PTHR11540">
    <property type="entry name" value="MALATE AND LACTATE DEHYDROGENASE"/>
    <property type="match status" value="1"/>
</dbReference>
<dbReference type="PANTHER" id="PTHR11540:SF16">
    <property type="entry name" value="MALATE DEHYDROGENASE, MITOCHONDRIAL"/>
    <property type="match status" value="1"/>
</dbReference>
<dbReference type="Pfam" id="PF02866">
    <property type="entry name" value="Ldh_1_C"/>
    <property type="match status" value="1"/>
</dbReference>
<dbReference type="Pfam" id="PF00056">
    <property type="entry name" value="Ldh_1_N"/>
    <property type="match status" value="1"/>
</dbReference>
<dbReference type="PIRSF" id="PIRSF000102">
    <property type="entry name" value="Lac_mal_DH"/>
    <property type="match status" value="1"/>
</dbReference>
<dbReference type="SUPFAM" id="SSF56327">
    <property type="entry name" value="LDH C-terminal domain-like"/>
    <property type="match status" value="1"/>
</dbReference>
<dbReference type="SUPFAM" id="SSF51735">
    <property type="entry name" value="NAD(P)-binding Rossmann-fold domains"/>
    <property type="match status" value="1"/>
</dbReference>
<dbReference type="PROSITE" id="PS00068">
    <property type="entry name" value="MDH"/>
    <property type="match status" value="1"/>
</dbReference>
<feature type="chain" id="PRO_0000294308" description="Malate dehydrogenase">
    <location>
        <begin position="1"/>
        <end position="312"/>
    </location>
</feature>
<feature type="active site" description="Proton acceptor" evidence="1">
    <location>
        <position position="177"/>
    </location>
</feature>
<feature type="binding site" evidence="1">
    <location>
        <begin position="7"/>
        <end position="13"/>
    </location>
    <ligand>
        <name>NAD(+)</name>
        <dbReference type="ChEBI" id="CHEBI:57540"/>
    </ligand>
</feature>
<feature type="binding site" evidence="1">
    <location>
        <position position="34"/>
    </location>
    <ligand>
        <name>NAD(+)</name>
        <dbReference type="ChEBI" id="CHEBI:57540"/>
    </ligand>
</feature>
<feature type="binding site" evidence="1">
    <location>
        <position position="81"/>
    </location>
    <ligand>
        <name>substrate</name>
    </ligand>
</feature>
<feature type="binding site" evidence="1">
    <location>
        <position position="87"/>
    </location>
    <ligand>
        <name>substrate</name>
    </ligand>
</feature>
<feature type="binding site" evidence="1">
    <location>
        <position position="94"/>
    </location>
    <ligand>
        <name>NAD(+)</name>
        <dbReference type="ChEBI" id="CHEBI:57540"/>
    </ligand>
</feature>
<feature type="binding site" evidence="1">
    <location>
        <begin position="117"/>
        <end position="119"/>
    </location>
    <ligand>
        <name>NAD(+)</name>
        <dbReference type="ChEBI" id="CHEBI:57540"/>
    </ligand>
</feature>
<feature type="binding site" evidence="1">
    <location>
        <position position="119"/>
    </location>
    <ligand>
        <name>substrate</name>
    </ligand>
</feature>
<feature type="binding site" evidence="1">
    <location>
        <position position="153"/>
    </location>
    <ligand>
        <name>substrate</name>
    </ligand>
</feature>
<feature type="binding site" evidence="1">
    <location>
        <position position="227"/>
    </location>
    <ligand>
        <name>NAD(+)</name>
        <dbReference type="ChEBI" id="CHEBI:57540"/>
    </ligand>
</feature>
<comment type="function">
    <text evidence="1">Catalyzes the reversible oxidation of malate to oxaloacetate.</text>
</comment>
<comment type="catalytic activity">
    <reaction evidence="1">
        <text>(S)-malate + NAD(+) = oxaloacetate + NADH + H(+)</text>
        <dbReference type="Rhea" id="RHEA:21432"/>
        <dbReference type="ChEBI" id="CHEBI:15378"/>
        <dbReference type="ChEBI" id="CHEBI:15589"/>
        <dbReference type="ChEBI" id="CHEBI:16452"/>
        <dbReference type="ChEBI" id="CHEBI:57540"/>
        <dbReference type="ChEBI" id="CHEBI:57945"/>
        <dbReference type="EC" id="1.1.1.37"/>
    </reaction>
</comment>
<comment type="subunit">
    <text evidence="1">Homodimer.</text>
</comment>
<comment type="similarity">
    <text evidence="1">Belongs to the LDH/MDH superfamily. MDH type 1 family.</text>
</comment>
<sequence length="312" mass="32337">MKVAVLGAAGGIGQALALLLKTQLPSGSELSLYDIAPVTPGVAVDLSHIPTAVKIKGFSGEDATPALEGADVVLISAGVARKPGMDRSDLFNVNAGIVKNLVQQVAKTCPKACIGIITNPVNTTVAIAAEVLKKAGVYDKNKLFGVTTLDIIRSNTFVAELKGKQPGEVEVPVIGGHSGVTILPLLSQVPGVSFTEQEVADLTKRIQNAGTEVVEAKAGGGSATLSMGQAAARFGLSLVRALQGEQGVVECAYVEGDGQYARFFSQPLLLGKNGVEERKSIGTLSAFEQNALEGMLDTLKKDIALGEEFVNK</sequence>
<gene>
    <name evidence="1" type="primary">mdh</name>
    <name type="ordered locus">SBO_3153</name>
</gene>
<accession>Q31WA4</accession>
<keyword id="KW-0520">NAD</keyword>
<keyword id="KW-0560">Oxidoreductase</keyword>
<keyword id="KW-0816">Tricarboxylic acid cycle</keyword>
<proteinExistence type="inferred from homology"/>
<name>MDH_SHIBS</name>
<evidence type="ECO:0000255" key="1">
    <source>
        <dbReference type="HAMAP-Rule" id="MF_01516"/>
    </source>
</evidence>
<organism>
    <name type="scientific">Shigella boydii serotype 4 (strain Sb227)</name>
    <dbReference type="NCBI Taxonomy" id="300268"/>
    <lineage>
        <taxon>Bacteria</taxon>
        <taxon>Pseudomonadati</taxon>
        <taxon>Pseudomonadota</taxon>
        <taxon>Gammaproteobacteria</taxon>
        <taxon>Enterobacterales</taxon>
        <taxon>Enterobacteriaceae</taxon>
        <taxon>Shigella</taxon>
    </lineage>
</organism>